<reference key="1">
    <citation type="journal article" date="2013" name="PLoS Pathog.">
        <title>Deciphering the cryptic genome: genome-wide analyses of the rice pathogen Fusarium fujikuroi reveal complex regulation of secondary metabolism and novel metabolites.</title>
        <authorList>
            <person name="Wiemann P."/>
            <person name="Sieber C.M.K."/>
            <person name="von Bargen K.W."/>
            <person name="Studt L."/>
            <person name="Niehaus E.-M."/>
            <person name="Espino J.J."/>
            <person name="Huss K."/>
            <person name="Michielse C.B."/>
            <person name="Albermann S."/>
            <person name="Wagner D."/>
            <person name="Bergner S.V."/>
            <person name="Connolly L.R."/>
            <person name="Fischer A."/>
            <person name="Reuter G."/>
            <person name="Kleigrewe K."/>
            <person name="Bald T."/>
            <person name="Wingfield B.D."/>
            <person name="Ophir R."/>
            <person name="Freeman S."/>
            <person name="Hippler M."/>
            <person name="Smith K.M."/>
            <person name="Brown D.W."/>
            <person name="Proctor R.H."/>
            <person name="Muensterkoetter M."/>
            <person name="Freitag M."/>
            <person name="Humpf H.-U."/>
            <person name="Gueldener U."/>
            <person name="Tudzynski B."/>
        </authorList>
    </citation>
    <scope>NUCLEOTIDE SEQUENCE [LARGE SCALE GENOMIC DNA]</scope>
    <source>
        <strain>CBS 195.34 / IMI 58289 / NRRL A-6831</strain>
    </source>
</reference>
<reference key="2">
    <citation type="journal article" date="2013" name="ChemBioChem">
        <title>Genetic dissection of sesquiterpene biosynthesis by Fusarium fujikuroi.</title>
        <authorList>
            <person name="Brock N.L."/>
            <person name="Huss K."/>
            <person name="Tudzynski B."/>
            <person name="Dickschat J.S."/>
        </authorList>
    </citation>
    <scope>FUNCTION</scope>
    <scope>CATALYTIC ACTIVITY</scope>
    <scope>DISRUPTION PHENOTYPE</scope>
</reference>
<organism>
    <name type="scientific">Gibberella fujikuroi (strain CBS 195.34 / IMI 58289 / NRRL A-6831)</name>
    <name type="common">Bakanae and foot rot disease fungus</name>
    <name type="synonym">Fusarium fujikuroi</name>
    <dbReference type="NCBI Taxonomy" id="1279085"/>
    <lineage>
        <taxon>Eukaryota</taxon>
        <taxon>Fungi</taxon>
        <taxon>Dikarya</taxon>
        <taxon>Ascomycota</taxon>
        <taxon>Pezizomycotina</taxon>
        <taxon>Sordariomycetes</taxon>
        <taxon>Hypocreomycetidae</taxon>
        <taxon>Hypocreales</taxon>
        <taxon>Nectriaceae</taxon>
        <taxon>Fusarium</taxon>
        <taxon>Fusarium fujikuroi species complex</taxon>
    </lineage>
</organism>
<protein>
    <recommendedName>
        <fullName evidence="5">Terpene cyclase 4</fullName>
        <ecNumber evidence="4">4.2.3.-</ecNumber>
    </recommendedName>
    <alternativeName>
        <fullName evidence="5">Sesquiterpene synthase 4</fullName>
    </alternativeName>
</protein>
<evidence type="ECO:0000250" key="1">
    <source>
        <dbReference type="UniProtKB" id="P9WEY7"/>
    </source>
</evidence>
<evidence type="ECO:0000250" key="2">
    <source>
        <dbReference type="UniProtKB" id="Q9UR08"/>
    </source>
</evidence>
<evidence type="ECO:0000256" key="3">
    <source>
        <dbReference type="SAM" id="MobiDB-lite"/>
    </source>
</evidence>
<evidence type="ECO:0000269" key="4">
    <source>
    </source>
</evidence>
<evidence type="ECO:0000303" key="5">
    <source>
    </source>
</evidence>
<evidence type="ECO:0000305" key="6"/>
<feature type="chain" id="PRO_0000452516" description="Terpene cyclase 4">
    <location>
        <begin position="1"/>
        <end position="365"/>
    </location>
</feature>
<feature type="region of interest" description="Disordered" evidence="3">
    <location>
        <begin position="1"/>
        <end position="20"/>
    </location>
</feature>
<feature type="short sequence motif" description="D(D/E)XX(D/E) motif" evidence="2">
    <location>
        <begin position="118"/>
        <end position="122"/>
    </location>
</feature>
<feature type="short sequence motif" description="NSE motif" evidence="1">
    <location>
        <begin position="260"/>
        <end position="268"/>
    </location>
</feature>
<feature type="short sequence motif" description="WxxxxxRY motif" evidence="1">
    <location>
        <begin position="341"/>
        <end position="348"/>
    </location>
</feature>
<feature type="compositionally biased region" description="Pro residues" evidence="3">
    <location>
        <begin position="1"/>
        <end position="11"/>
    </location>
</feature>
<feature type="binding site" evidence="2">
    <location>
        <position position="118"/>
    </location>
    <ligand>
        <name>Mg(2+)</name>
        <dbReference type="ChEBI" id="CHEBI:18420"/>
        <label>1</label>
    </ligand>
</feature>
<feature type="binding site" evidence="2">
    <location>
        <position position="118"/>
    </location>
    <ligand>
        <name>Mg(2+)</name>
        <dbReference type="ChEBI" id="CHEBI:18420"/>
        <label>2</label>
    </ligand>
</feature>
<feature type="binding site" evidence="2">
    <location>
        <position position="260"/>
    </location>
    <ligand>
        <name>Mg(2+)</name>
        <dbReference type="ChEBI" id="CHEBI:18420"/>
        <label>3</label>
    </ligand>
</feature>
<feature type="binding site" evidence="2">
    <location>
        <position position="264"/>
    </location>
    <ligand>
        <name>Mg(2+)</name>
        <dbReference type="ChEBI" id="CHEBI:18420"/>
        <label>3</label>
    </ligand>
</feature>
<feature type="binding site" evidence="2">
    <location>
        <position position="347"/>
    </location>
    <ligand>
        <name>(2E,6E)-farnesyl diphosphate</name>
        <dbReference type="ChEBI" id="CHEBI:175763"/>
    </ligand>
</feature>
<feature type="binding site" evidence="2">
    <location>
        <position position="348"/>
    </location>
    <ligand>
        <name>(2E,6E)-farnesyl diphosphate</name>
        <dbReference type="ChEBI" id="CHEBI:175763"/>
    </ligand>
</feature>
<proteinExistence type="evidence at protein level"/>
<keyword id="KW-0456">Lyase</keyword>
<keyword id="KW-0460">Magnesium</keyword>
<keyword id="KW-0479">Metal-binding</keyword>
<keyword id="KW-1185">Reference proteome</keyword>
<dbReference type="EC" id="4.2.3.-" evidence="4"/>
<dbReference type="EMBL" id="HF679030">
    <property type="protein sequence ID" value="CCT72694.1"/>
    <property type="molecule type" value="Genomic_DNA"/>
</dbReference>
<dbReference type="SMR" id="S0ECT9"/>
<dbReference type="STRING" id="1279085.S0ECT9"/>
<dbReference type="VEuPathDB" id="FungiDB:FFUJ_12585"/>
<dbReference type="Proteomes" id="UP000016800">
    <property type="component" value="Chromosome 8"/>
</dbReference>
<dbReference type="GO" id="GO:0046872">
    <property type="term" value="F:metal ion binding"/>
    <property type="evidence" value="ECO:0007669"/>
    <property type="project" value="UniProtKB-KW"/>
</dbReference>
<dbReference type="GO" id="GO:0010333">
    <property type="term" value="F:terpene synthase activity"/>
    <property type="evidence" value="ECO:0007669"/>
    <property type="project" value="InterPro"/>
</dbReference>
<dbReference type="GO" id="GO:0008299">
    <property type="term" value="P:isoprenoid biosynthetic process"/>
    <property type="evidence" value="ECO:0007669"/>
    <property type="project" value="UniProtKB-ARBA"/>
</dbReference>
<dbReference type="Gene3D" id="1.10.600.10">
    <property type="entry name" value="Farnesyl Diphosphate Synthase"/>
    <property type="match status" value="1"/>
</dbReference>
<dbReference type="InterPro" id="IPR008949">
    <property type="entry name" value="Isoprenoid_synthase_dom_sf"/>
</dbReference>
<dbReference type="InterPro" id="IPR034686">
    <property type="entry name" value="Terpene_cyclase-like_2"/>
</dbReference>
<dbReference type="PANTHER" id="PTHR35201:SF4">
    <property type="entry name" value="BETA-PINACENE SYNTHASE-RELATED"/>
    <property type="match status" value="1"/>
</dbReference>
<dbReference type="PANTHER" id="PTHR35201">
    <property type="entry name" value="TERPENE SYNTHASE"/>
    <property type="match status" value="1"/>
</dbReference>
<dbReference type="Pfam" id="PF19086">
    <property type="entry name" value="Terpene_syn_C_2"/>
    <property type="match status" value="1"/>
</dbReference>
<dbReference type="SFLD" id="SFLDS00005">
    <property type="entry name" value="Isoprenoid_Synthase_Type_I"/>
    <property type="match status" value="1"/>
</dbReference>
<dbReference type="SFLD" id="SFLDG01020">
    <property type="entry name" value="Terpene_Cyclase_Like_2"/>
    <property type="match status" value="1"/>
</dbReference>
<dbReference type="SUPFAM" id="SSF48576">
    <property type="entry name" value="Terpenoid synthases"/>
    <property type="match status" value="1"/>
</dbReference>
<comment type="function">
    <text evidence="4">Terpene cyclase that catalyzes the cyclization of farnesyl diphosphate (FPP) to the sesquiterpene koraiol.</text>
</comment>
<comment type="catalytic activity">
    <reaction evidence="4">
        <text>(2E,6E)-farnesyl diphosphate + H2O = koraiol + diphosphate</text>
        <dbReference type="Rhea" id="RHEA:66640"/>
        <dbReference type="ChEBI" id="CHEBI:15377"/>
        <dbReference type="ChEBI" id="CHEBI:33019"/>
        <dbReference type="ChEBI" id="CHEBI:167323"/>
        <dbReference type="ChEBI" id="CHEBI:175763"/>
    </reaction>
    <physiologicalReaction direction="left-to-right" evidence="4">
        <dbReference type="Rhea" id="RHEA:66641"/>
    </physiologicalReaction>
</comment>
<comment type="cofactor">
    <cofactor evidence="2">
        <name>Mg(2+)</name>
        <dbReference type="ChEBI" id="CHEBI:18420"/>
    </cofactor>
    <text evidence="2">Binds 3 Mg(2+) ions per monomer.</text>
</comment>
<comment type="pathway">
    <text evidence="4">Sesquiterpene biosynthesis.</text>
</comment>
<comment type="subunit">
    <text evidence="2">Homodimer.</text>
</comment>
<comment type="domain">
    <text evidence="2">The 2 conserved active-site motifs D(D/E)XX(D/E) and NSE are required for coordinating the divalent metal ions that stabilize the PPi moiety of the substrate.</text>
</comment>
<comment type="domain">
    <text evidence="1">The C-terminal WxxxxxRY motif is frequently found in terpene synthases and is important to guide product formation.</text>
</comment>
<comment type="disruption phenotype">
    <text evidence="4">Abolishes the production of koraiol.</text>
</comment>
<comment type="similarity">
    <text evidence="6">Belongs to the terpene synthase family.</text>
</comment>
<accession>S0ECT9</accession>
<gene>
    <name evidence="5" type="primary">Ffsc4</name>
    <name type="ORF">FFUJ_12585</name>
</gene>
<name>FFSC4_GIBF5</name>
<sequence>MVPSLITPPPSRSGEATPQKDACLNPVNIAEPEGHWIKLPEALFSSIMAVEPEVNPLYRTSKALSDEWLKTALRMNDKTAVIWSRLDIAYMSAICAPHADLETLKLMNDWNGWVFAFDDPFDEGTFANDPIKAAEEVIYTLATLDNIHPVVSPDENPLRHTLQSCWMRFRERSSPSLQYRWKKHLTMYCVGVLQQVGVQHRATRPTIEEYMDMRAGCVGAYPCIGLMEFAEGIDIPQNVMDHPSMQAISRITCDLVTLQNDLCSYRKDLIQGEESNIIFILKDQGMTDQQAVDQIGEMLYDCYRRWHMALANLPFWGEGIDRDVIKFVTGCRNIALGNLHWSLYTFRYLGNDGPEVKRTRMMKLP</sequence>